<evidence type="ECO:0000255" key="1">
    <source>
        <dbReference type="HAMAP-Rule" id="MF_02004"/>
    </source>
</evidence>
<name>SYV_NITV2</name>
<gene>
    <name evidence="1" type="primary">valS</name>
    <name type="ordered locus">DVU_0732</name>
</gene>
<protein>
    <recommendedName>
        <fullName evidence="1">Valine--tRNA ligase</fullName>
        <ecNumber evidence="1">6.1.1.9</ecNumber>
    </recommendedName>
    <alternativeName>
        <fullName evidence="1">Valyl-tRNA synthetase</fullName>
        <shortName evidence="1">ValRS</shortName>
    </alternativeName>
</protein>
<accession>Q72E47</accession>
<reference key="1">
    <citation type="journal article" date="2004" name="Nat. Biotechnol.">
        <title>The genome sequence of the anaerobic, sulfate-reducing bacterium Desulfovibrio vulgaris Hildenborough.</title>
        <authorList>
            <person name="Heidelberg J.F."/>
            <person name="Seshadri R."/>
            <person name="Haveman S.A."/>
            <person name="Hemme C.L."/>
            <person name="Paulsen I.T."/>
            <person name="Kolonay J.F."/>
            <person name="Eisen J.A."/>
            <person name="Ward N.L."/>
            <person name="Methe B.A."/>
            <person name="Brinkac L.M."/>
            <person name="Daugherty S.C."/>
            <person name="DeBoy R.T."/>
            <person name="Dodson R.J."/>
            <person name="Durkin A.S."/>
            <person name="Madupu R."/>
            <person name="Nelson W.C."/>
            <person name="Sullivan S.A."/>
            <person name="Fouts D.E."/>
            <person name="Haft D.H."/>
            <person name="Selengut J."/>
            <person name="Peterson J.D."/>
            <person name="Davidsen T.M."/>
            <person name="Zafar N."/>
            <person name="Zhou L."/>
            <person name="Radune D."/>
            <person name="Dimitrov G."/>
            <person name="Hance M."/>
            <person name="Tran K."/>
            <person name="Khouri H.M."/>
            <person name="Gill J."/>
            <person name="Utterback T.R."/>
            <person name="Feldblyum T.V."/>
            <person name="Wall J.D."/>
            <person name="Voordouw G."/>
            <person name="Fraser C.M."/>
        </authorList>
    </citation>
    <scope>NUCLEOTIDE SEQUENCE [LARGE SCALE GENOMIC DNA]</scope>
    <source>
        <strain>ATCC 29579 / DSM 644 / CCUG 34227 / NCIMB 8303 / VKM B-1760 / Hildenborough</strain>
    </source>
</reference>
<feature type="chain" id="PRO_0000224474" description="Valine--tRNA ligase">
    <location>
        <begin position="1"/>
        <end position="884"/>
    </location>
</feature>
<feature type="coiled-coil region" evidence="1">
    <location>
        <begin position="812"/>
        <end position="884"/>
    </location>
</feature>
<feature type="short sequence motif" description="'HIGH' region">
    <location>
        <begin position="47"/>
        <end position="57"/>
    </location>
</feature>
<feature type="short sequence motif" description="'KMSKS' region">
    <location>
        <begin position="525"/>
        <end position="529"/>
    </location>
</feature>
<feature type="binding site" evidence="1">
    <location>
        <position position="528"/>
    </location>
    <ligand>
        <name>ATP</name>
        <dbReference type="ChEBI" id="CHEBI:30616"/>
    </ligand>
</feature>
<sequence>MAENALPKGYEPRDVEERWRRHWEDNRTFTPDMDAPGEPYSIVIPPPNVTGALHIGHALNHVLIDVLCRNARQQGKKVLWLPGTDHAGIATQNVVERALAKEGLSRHDLGREAFIERVWQWKEEYGNRILNQIRMLGDSVDWTRERFTMDEGLSKAVRKVFVDLYNGGYIYRGNYIINWCNRCHTALADDEVDHMPEQGHLYHVRYDFEDGSGSVVIATTRPETIMADTGVCVHPEDERYAGLIGKKILVPVIGRAVPLFADTYVDREFGTGALKVTPCHDPNDWTLGERHGLAFIQCIDEDGNMTAEAGPYAGLTKEECRKRIVADLEASGQLVRVEELNHSVGHCYRCKTVVEPHMSEQWFVASTKLAPRARAAVPQMTQIFPESWMKTYFNWLDNIRDWCISRQIWWGHRIPAWTCGKCGKLIVSEQDPTACPDCGCTDLTQDPDVLDTWFSSALWPFSTMGWPDKTKDLATFYPTSVLVTGFDILFFWVARMMMLGMHFMDEVPFKHVYLHALVRDGEGRKMSKSTGNVIDPLAMIDKYGTDSLRFTLAAFAAMGRDIKLSEDRIEGYRHFVNKVWNAARFSLMNLPEEAPAALDLDNVKGMHHKWILHRLEELKASQAAGIDGYRFNEVAQGLYRFWWNEFCDWYLELIKPDMQAGGERQATAQYVLWTVLREALLLLHPFMPFVTAEVWQALPGHAGDDIATKLYPAARPGCRDVKDAEHMELVQATISAVRTIRAELNIAPSYRLTTLVRPASAEDAATLEEGREMLMTLARLDGLTVAVDVEAPKASASSVVAGNEVIVPLTGAVDFEAELARLDKELGKIEKDFVQVNKKLANESFVSKAPADVVAKERARAEELSDAKAKLEALQQRFRDAIGK</sequence>
<organism>
    <name type="scientific">Nitratidesulfovibrio vulgaris (strain ATCC 29579 / DSM 644 / CCUG 34227 / NCIMB 8303 / VKM B-1760 / Hildenborough)</name>
    <name type="common">Desulfovibrio vulgaris</name>
    <dbReference type="NCBI Taxonomy" id="882"/>
    <lineage>
        <taxon>Bacteria</taxon>
        <taxon>Pseudomonadati</taxon>
        <taxon>Thermodesulfobacteriota</taxon>
        <taxon>Desulfovibrionia</taxon>
        <taxon>Desulfovibrionales</taxon>
        <taxon>Desulfovibrionaceae</taxon>
        <taxon>Nitratidesulfovibrio</taxon>
    </lineage>
</organism>
<keyword id="KW-0030">Aminoacyl-tRNA synthetase</keyword>
<keyword id="KW-0067">ATP-binding</keyword>
<keyword id="KW-0175">Coiled coil</keyword>
<keyword id="KW-0963">Cytoplasm</keyword>
<keyword id="KW-0436">Ligase</keyword>
<keyword id="KW-0547">Nucleotide-binding</keyword>
<keyword id="KW-0648">Protein biosynthesis</keyword>
<keyword id="KW-1185">Reference proteome</keyword>
<proteinExistence type="evidence at protein level"/>
<comment type="function">
    <text evidence="1">Catalyzes the attachment of valine to tRNA(Val). As ValRS can inadvertently accommodate and process structurally similar amino acids such as threonine, to avoid such errors, it has a 'posttransfer' editing activity that hydrolyzes mischarged Thr-tRNA(Val) in a tRNA-dependent manner.</text>
</comment>
<comment type="catalytic activity">
    <reaction evidence="1">
        <text>tRNA(Val) + L-valine + ATP = L-valyl-tRNA(Val) + AMP + diphosphate</text>
        <dbReference type="Rhea" id="RHEA:10704"/>
        <dbReference type="Rhea" id="RHEA-COMP:9672"/>
        <dbReference type="Rhea" id="RHEA-COMP:9708"/>
        <dbReference type="ChEBI" id="CHEBI:30616"/>
        <dbReference type="ChEBI" id="CHEBI:33019"/>
        <dbReference type="ChEBI" id="CHEBI:57762"/>
        <dbReference type="ChEBI" id="CHEBI:78442"/>
        <dbReference type="ChEBI" id="CHEBI:78537"/>
        <dbReference type="ChEBI" id="CHEBI:456215"/>
        <dbReference type="EC" id="6.1.1.9"/>
    </reaction>
</comment>
<comment type="subunit">
    <text evidence="1">Monomer.</text>
</comment>
<comment type="interaction">
    <interactant intactId="EBI-10070747">
        <id>Q72E47</id>
    </interactant>
    <interactant intactId="EBI-10071594">
        <id>Q72F06</id>
        <label>DVU_0412</label>
    </interactant>
    <organismsDiffer>false</organismsDiffer>
    <experiments>2</experiments>
</comment>
<comment type="subcellular location">
    <subcellularLocation>
        <location evidence="1">Cytoplasm</location>
    </subcellularLocation>
</comment>
<comment type="domain">
    <text evidence="1">ValRS has two distinct active sites: one for aminoacylation and one for editing. The misactivated threonine is translocated from the active site to the editing site.</text>
</comment>
<comment type="domain">
    <text evidence="1">The C-terminal coiled-coil domain is crucial for aminoacylation activity.</text>
</comment>
<comment type="similarity">
    <text evidence="1">Belongs to the class-I aminoacyl-tRNA synthetase family. ValS type 1 subfamily.</text>
</comment>
<dbReference type="EC" id="6.1.1.9" evidence="1"/>
<dbReference type="EMBL" id="AE017285">
    <property type="protein sequence ID" value="AAS95212.1"/>
    <property type="molecule type" value="Genomic_DNA"/>
</dbReference>
<dbReference type="RefSeq" id="WP_010938033.1">
    <property type="nucleotide sequence ID" value="NC_002937.3"/>
</dbReference>
<dbReference type="RefSeq" id="YP_009953.1">
    <property type="nucleotide sequence ID" value="NC_002937.3"/>
</dbReference>
<dbReference type="SMR" id="Q72E47"/>
<dbReference type="IntAct" id="Q72E47">
    <property type="interactions" value="2"/>
</dbReference>
<dbReference type="STRING" id="882.DVU_0732"/>
<dbReference type="PaxDb" id="882-DVU_0732"/>
<dbReference type="EnsemblBacteria" id="AAS95212">
    <property type="protein sequence ID" value="AAS95212"/>
    <property type="gene ID" value="DVU_0732"/>
</dbReference>
<dbReference type="KEGG" id="dvu:DVU_0732"/>
<dbReference type="PATRIC" id="fig|882.5.peg.688"/>
<dbReference type="eggNOG" id="COG0525">
    <property type="taxonomic scope" value="Bacteria"/>
</dbReference>
<dbReference type="HOGENOM" id="CLU_001493_0_2_7"/>
<dbReference type="OrthoDB" id="9810365at2"/>
<dbReference type="PhylomeDB" id="Q72E47"/>
<dbReference type="Proteomes" id="UP000002194">
    <property type="component" value="Chromosome"/>
</dbReference>
<dbReference type="GO" id="GO:0005829">
    <property type="term" value="C:cytosol"/>
    <property type="evidence" value="ECO:0007669"/>
    <property type="project" value="TreeGrafter"/>
</dbReference>
<dbReference type="GO" id="GO:0002161">
    <property type="term" value="F:aminoacyl-tRNA deacylase activity"/>
    <property type="evidence" value="ECO:0007669"/>
    <property type="project" value="InterPro"/>
</dbReference>
<dbReference type="GO" id="GO:0005524">
    <property type="term" value="F:ATP binding"/>
    <property type="evidence" value="ECO:0007669"/>
    <property type="project" value="UniProtKB-UniRule"/>
</dbReference>
<dbReference type="GO" id="GO:0004832">
    <property type="term" value="F:valine-tRNA ligase activity"/>
    <property type="evidence" value="ECO:0007669"/>
    <property type="project" value="UniProtKB-UniRule"/>
</dbReference>
<dbReference type="GO" id="GO:0006438">
    <property type="term" value="P:valyl-tRNA aminoacylation"/>
    <property type="evidence" value="ECO:0007669"/>
    <property type="project" value="UniProtKB-UniRule"/>
</dbReference>
<dbReference type="CDD" id="cd07962">
    <property type="entry name" value="Anticodon_Ia_Val"/>
    <property type="match status" value="1"/>
</dbReference>
<dbReference type="CDD" id="cd00817">
    <property type="entry name" value="ValRS_core"/>
    <property type="match status" value="1"/>
</dbReference>
<dbReference type="FunFam" id="1.10.287.380:FF:000001">
    <property type="entry name" value="Valine--tRNA ligase"/>
    <property type="match status" value="1"/>
</dbReference>
<dbReference type="FunFam" id="1.10.730.10:FF:000014">
    <property type="entry name" value="Valine--tRNA ligase"/>
    <property type="match status" value="1"/>
</dbReference>
<dbReference type="FunFam" id="3.40.50.620:FF:000032">
    <property type="entry name" value="Valine--tRNA ligase"/>
    <property type="match status" value="1"/>
</dbReference>
<dbReference type="FunFam" id="3.40.50.620:FF:000098">
    <property type="entry name" value="Valine--tRNA ligase"/>
    <property type="match status" value="1"/>
</dbReference>
<dbReference type="Gene3D" id="3.40.50.620">
    <property type="entry name" value="HUPs"/>
    <property type="match status" value="2"/>
</dbReference>
<dbReference type="Gene3D" id="1.10.730.10">
    <property type="entry name" value="Isoleucyl-tRNA Synthetase, Domain 1"/>
    <property type="match status" value="1"/>
</dbReference>
<dbReference type="Gene3D" id="1.10.287.380">
    <property type="entry name" value="Valyl-tRNA synthetase, C-terminal domain"/>
    <property type="match status" value="1"/>
</dbReference>
<dbReference type="Gene3D" id="3.90.740.10">
    <property type="entry name" value="Valyl/Leucyl/Isoleucyl-tRNA synthetase, editing domain"/>
    <property type="match status" value="1"/>
</dbReference>
<dbReference type="HAMAP" id="MF_02004">
    <property type="entry name" value="Val_tRNA_synth_type1"/>
    <property type="match status" value="1"/>
</dbReference>
<dbReference type="InterPro" id="IPR001412">
    <property type="entry name" value="aa-tRNA-synth_I_CS"/>
</dbReference>
<dbReference type="InterPro" id="IPR002300">
    <property type="entry name" value="aa-tRNA-synth_Ia"/>
</dbReference>
<dbReference type="InterPro" id="IPR033705">
    <property type="entry name" value="Anticodon_Ia_Val"/>
</dbReference>
<dbReference type="InterPro" id="IPR013155">
    <property type="entry name" value="M/V/L/I-tRNA-synth_anticd-bd"/>
</dbReference>
<dbReference type="InterPro" id="IPR014729">
    <property type="entry name" value="Rossmann-like_a/b/a_fold"/>
</dbReference>
<dbReference type="InterPro" id="IPR010978">
    <property type="entry name" value="tRNA-bd_arm"/>
</dbReference>
<dbReference type="InterPro" id="IPR009080">
    <property type="entry name" value="tRNAsynth_Ia_anticodon-bd"/>
</dbReference>
<dbReference type="InterPro" id="IPR037118">
    <property type="entry name" value="Val-tRNA_synth_C_sf"/>
</dbReference>
<dbReference type="InterPro" id="IPR019499">
    <property type="entry name" value="Val-tRNA_synth_tRNA-bd"/>
</dbReference>
<dbReference type="InterPro" id="IPR009008">
    <property type="entry name" value="Val/Leu/Ile-tRNA-synth_edit"/>
</dbReference>
<dbReference type="InterPro" id="IPR002303">
    <property type="entry name" value="Valyl-tRNA_ligase"/>
</dbReference>
<dbReference type="NCBIfam" id="NF004349">
    <property type="entry name" value="PRK05729.1"/>
    <property type="match status" value="1"/>
</dbReference>
<dbReference type="NCBIfam" id="TIGR00422">
    <property type="entry name" value="valS"/>
    <property type="match status" value="1"/>
</dbReference>
<dbReference type="PANTHER" id="PTHR11946:SF93">
    <property type="entry name" value="VALINE--TRNA LIGASE, CHLOROPLASTIC_MITOCHONDRIAL 2"/>
    <property type="match status" value="1"/>
</dbReference>
<dbReference type="PANTHER" id="PTHR11946">
    <property type="entry name" value="VALYL-TRNA SYNTHETASES"/>
    <property type="match status" value="1"/>
</dbReference>
<dbReference type="Pfam" id="PF08264">
    <property type="entry name" value="Anticodon_1"/>
    <property type="match status" value="1"/>
</dbReference>
<dbReference type="Pfam" id="PF00133">
    <property type="entry name" value="tRNA-synt_1"/>
    <property type="match status" value="1"/>
</dbReference>
<dbReference type="Pfam" id="PF10458">
    <property type="entry name" value="Val_tRNA-synt_C"/>
    <property type="match status" value="1"/>
</dbReference>
<dbReference type="PRINTS" id="PR00986">
    <property type="entry name" value="TRNASYNTHVAL"/>
</dbReference>
<dbReference type="SUPFAM" id="SSF47323">
    <property type="entry name" value="Anticodon-binding domain of a subclass of class I aminoacyl-tRNA synthetases"/>
    <property type="match status" value="1"/>
</dbReference>
<dbReference type="SUPFAM" id="SSF52374">
    <property type="entry name" value="Nucleotidylyl transferase"/>
    <property type="match status" value="1"/>
</dbReference>
<dbReference type="SUPFAM" id="SSF46589">
    <property type="entry name" value="tRNA-binding arm"/>
    <property type="match status" value="1"/>
</dbReference>
<dbReference type="SUPFAM" id="SSF50677">
    <property type="entry name" value="ValRS/IleRS/LeuRS editing domain"/>
    <property type="match status" value="1"/>
</dbReference>
<dbReference type="PROSITE" id="PS00178">
    <property type="entry name" value="AA_TRNA_LIGASE_I"/>
    <property type="match status" value="1"/>
</dbReference>